<dbReference type="EC" id="1.14.14.154" evidence="3 5 6"/>
<dbReference type="EMBL" id="U23942">
    <property type="protein sequence ID" value="AAB39951.1"/>
    <property type="molecule type" value="mRNA"/>
</dbReference>
<dbReference type="EMBL" id="D55653">
    <property type="protein sequence ID" value="BAA09512.1"/>
    <property type="molecule type" value="mRNA"/>
</dbReference>
<dbReference type="EMBL" id="U51692">
    <property type="protein sequence ID" value="AAC50951.1"/>
    <property type="status" value="ALT_INIT"/>
    <property type="molecule type" value="Genomic_DNA"/>
</dbReference>
<dbReference type="EMBL" id="U51684">
    <property type="protein sequence ID" value="AAC50951.1"/>
    <property type="status" value="JOINED"/>
    <property type="molecule type" value="Genomic_DNA"/>
</dbReference>
<dbReference type="EMBL" id="U51685">
    <property type="protein sequence ID" value="AAC50951.1"/>
    <property type="status" value="JOINED"/>
    <property type="molecule type" value="Genomic_DNA"/>
</dbReference>
<dbReference type="EMBL" id="U51686">
    <property type="protein sequence ID" value="AAC50951.1"/>
    <property type="status" value="JOINED"/>
    <property type="molecule type" value="Genomic_DNA"/>
</dbReference>
<dbReference type="EMBL" id="U51687">
    <property type="protein sequence ID" value="AAC50951.1"/>
    <property type="status" value="JOINED"/>
    <property type="molecule type" value="Genomic_DNA"/>
</dbReference>
<dbReference type="EMBL" id="U51688">
    <property type="protein sequence ID" value="AAC50951.1"/>
    <property type="status" value="JOINED"/>
    <property type="molecule type" value="Genomic_DNA"/>
</dbReference>
<dbReference type="EMBL" id="U51689">
    <property type="protein sequence ID" value="AAC50951.1"/>
    <property type="status" value="JOINED"/>
    <property type="molecule type" value="Genomic_DNA"/>
</dbReference>
<dbReference type="EMBL" id="U51690">
    <property type="protein sequence ID" value="AAC50951.1"/>
    <property type="status" value="JOINED"/>
    <property type="molecule type" value="Genomic_DNA"/>
</dbReference>
<dbReference type="EMBL" id="U51691">
    <property type="protein sequence ID" value="AAC50951.1"/>
    <property type="status" value="JOINED"/>
    <property type="molecule type" value="Genomic_DNA"/>
</dbReference>
<dbReference type="EMBL" id="AK314205">
    <property type="protein sequence ID" value="BAG36881.1"/>
    <property type="molecule type" value="mRNA"/>
</dbReference>
<dbReference type="EMBL" id="AK295932">
    <property type="protein sequence ID" value="BAG58717.1"/>
    <property type="molecule type" value="mRNA"/>
</dbReference>
<dbReference type="EMBL" id="AC000120">
    <property type="protein sequence ID" value="AAB46356.1"/>
    <property type="molecule type" value="Genomic_DNA"/>
</dbReference>
<dbReference type="EMBL" id="CH236949">
    <property type="protein sequence ID" value="EAL24154.1"/>
    <property type="molecule type" value="Genomic_DNA"/>
</dbReference>
<dbReference type="EMBL" id="CH471091">
    <property type="protein sequence ID" value="EAW76858.1"/>
    <property type="molecule type" value="Genomic_DNA"/>
</dbReference>
<dbReference type="EMBL" id="CH471091">
    <property type="protein sequence ID" value="EAW76859.1"/>
    <property type="molecule type" value="Genomic_DNA"/>
</dbReference>
<dbReference type="EMBL" id="BC032322">
    <property type="protein sequence ID" value="AAH32322.1"/>
    <property type="molecule type" value="mRNA"/>
</dbReference>
<dbReference type="CCDS" id="CCDS55123.1">
    <molecule id="Q16850-2"/>
</dbReference>
<dbReference type="CCDS" id="CCDS5623.1">
    <molecule id="Q16850-1"/>
</dbReference>
<dbReference type="PIR" id="JC4759">
    <property type="entry name" value="JC4759"/>
</dbReference>
<dbReference type="PIR" id="S68855">
    <property type="entry name" value="S68855"/>
</dbReference>
<dbReference type="RefSeq" id="NP_000777.1">
    <molecule id="Q16850-1"/>
    <property type="nucleotide sequence ID" value="NM_000786.4"/>
</dbReference>
<dbReference type="RefSeq" id="NP_001139624.1">
    <molecule id="Q16850-2"/>
    <property type="nucleotide sequence ID" value="NM_001146152.2"/>
</dbReference>
<dbReference type="PDB" id="3JUS">
    <property type="method" value="X-ray"/>
    <property type="resolution" value="2.90 A"/>
    <property type="chains" value="A/B=60-508"/>
</dbReference>
<dbReference type="PDB" id="3JUV">
    <property type="method" value="X-ray"/>
    <property type="resolution" value="3.12 A"/>
    <property type="chains" value="A=60-508"/>
</dbReference>
<dbReference type="PDB" id="3LD6">
    <property type="method" value="X-ray"/>
    <property type="resolution" value="2.80 A"/>
    <property type="chains" value="A/B=60-508"/>
</dbReference>
<dbReference type="PDB" id="4UHI">
    <property type="method" value="X-ray"/>
    <property type="resolution" value="2.04 A"/>
    <property type="chains" value="A/B/C/D=67-509"/>
</dbReference>
<dbReference type="PDB" id="4UHL">
    <property type="method" value="X-ray"/>
    <property type="resolution" value="2.50 A"/>
    <property type="chains" value="A/B/C/D/E/F/G/H=67-509"/>
</dbReference>
<dbReference type="PDB" id="6Q2T">
    <property type="method" value="X-ray"/>
    <property type="resolution" value="2.80 A"/>
    <property type="chains" value="A/B=67-509"/>
</dbReference>
<dbReference type="PDB" id="6UEZ">
    <property type="method" value="X-ray"/>
    <property type="resolution" value="1.98 A"/>
    <property type="chains" value="A/B=67-509"/>
</dbReference>
<dbReference type="PDB" id="8SBI">
    <property type="method" value="X-ray"/>
    <property type="resolution" value="2.73 A"/>
    <property type="chains" value="A/B=67-508"/>
</dbReference>
<dbReference type="PDB" id="8SS0">
    <property type="method" value="X-ray"/>
    <property type="resolution" value="2.25 A"/>
    <property type="chains" value="A/B=67-509"/>
</dbReference>
<dbReference type="PDBsum" id="3JUS"/>
<dbReference type="PDBsum" id="3JUV"/>
<dbReference type="PDBsum" id="3LD6"/>
<dbReference type="PDBsum" id="4UHI"/>
<dbReference type="PDBsum" id="4UHL"/>
<dbReference type="PDBsum" id="6Q2T"/>
<dbReference type="PDBsum" id="6UEZ"/>
<dbReference type="PDBsum" id="8SBI"/>
<dbReference type="PDBsum" id="8SS0"/>
<dbReference type="SMR" id="Q16850"/>
<dbReference type="BioGRID" id="107967">
    <property type="interactions" value="222"/>
</dbReference>
<dbReference type="FunCoup" id="Q16850">
    <property type="interactions" value="1006"/>
</dbReference>
<dbReference type="IntAct" id="Q16850">
    <property type="interactions" value="77"/>
</dbReference>
<dbReference type="MINT" id="Q16850"/>
<dbReference type="STRING" id="9606.ENSP00000003100"/>
<dbReference type="BindingDB" id="Q16850"/>
<dbReference type="ChEMBL" id="CHEMBL3849"/>
<dbReference type="DrugBank" id="DB07705">
    <property type="generic name" value="(S)-econazole"/>
</dbReference>
<dbReference type="DrugBank" id="DB05667">
    <property type="generic name" value="Levoketoconazole"/>
</dbReference>
<dbReference type="DrugBank" id="DB01110">
    <property type="generic name" value="Miconazole"/>
</dbReference>
<dbReference type="DrugBank" id="DB17758">
    <property type="generic name" value="Quilseconazole"/>
</dbReference>
<dbReference type="DrugBank" id="DB01007">
    <property type="generic name" value="Tioconazole"/>
</dbReference>
<dbReference type="DrugCentral" id="Q16850"/>
<dbReference type="GuidetoPHARMACOLOGY" id="1374"/>
<dbReference type="SwissLipids" id="SLP:000001162"/>
<dbReference type="iPTMnet" id="Q16850"/>
<dbReference type="PhosphoSitePlus" id="Q16850"/>
<dbReference type="SwissPalm" id="Q16850"/>
<dbReference type="BioMuta" id="CYP51A1"/>
<dbReference type="DMDM" id="3915660"/>
<dbReference type="jPOST" id="Q16850"/>
<dbReference type="MassIVE" id="Q16850"/>
<dbReference type="PaxDb" id="9606-ENSP00000003100"/>
<dbReference type="PeptideAtlas" id="Q16850"/>
<dbReference type="ProteomicsDB" id="61101">
    <molecule id="Q16850-1"/>
</dbReference>
<dbReference type="ProteomicsDB" id="61102">
    <molecule id="Q16850-2"/>
</dbReference>
<dbReference type="Pumba" id="Q16850"/>
<dbReference type="Antibodypedia" id="34871">
    <property type="antibodies" value="265 antibodies from 31 providers"/>
</dbReference>
<dbReference type="DNASU" id="1595"/>
<dbReference type="Ensembl" id="ENST00000003100.13">
    <molecule id="Q16850-1"/>
    <property type="protein sequence ID" value="ENSP00000003100.8"/>
    <property type="gene ID" value="ENSG00000001630.18"/>
</dbReference>
<dbReference type="Ensembl" id="ENST00000450723.5">
    <molecule id="Q16850-2"/>
    <property type="protein sequence ID" value="ENSP00000406757.1"/>
    <property type="gene ID" value="ENSG00000001630.18"/>
</dbReference>
<dbReference type="GeneID" id="1595"/>
<dbReference type="KEGG" id="hsa:1595"/>
<dbReference type="MANE-Select" id="ENST00000003100.13">
    <property type="protein sequence ID" value="ENSP00000003100.8"/>
    <property type="RefSeq nucleotide sequence ID" value="NM_000786.4"/>
    <property type="RefSeq protein sequence ID" value="NP_000777.1"/>
</dbReference>
<dbReference type="UCSC" id="uc003ulm.5">
    <molecule id="Q16850-1"/>
    <property type="organism name" value="human"/>
</dbReference>
<dbReference type="AGR" id="HGNC:2649"/>
<dbReference type="CTD" id="1595"/>
<dbReference type="DisGeNET" id="1595"/>
<dbReference type="GeneCards" id="CYP51A1"/>
<dbReference type="HGNC" id="HGNC:2649">
    <property type="gene designation" value="CYP51A1"/>
</dbReference>
<dbReference type="HPA" id="ENSG00000001630">
    <property type="expression patterns" value="Tissue enhanced (liver)"/>
</dbReference>
<dbReference type="MalaCards" id="CYP51A1"/>
<dbReference type="MIM" id="601637">
    <property type="type" value="gene"/>
</dbReference>
<dbReference type="neXtProt" id="NX_Q16850"/>
<dbReference type="OpenTargets" id="ENSG00000001630"/>
<dbReference type="Orphanet" id="521432">
    <property type="disease" value="Congenital cataract-severe neonatal hepatopathy-global developmental delay syndrome"/>
</dbReference>
<dbReference type="PharmGKB" id="PA27123"/>
<dbReference type="VEuPathDB" id="HostDB:ENSG00000001630"/>
<dbReference type="eggNOG" id="KOG0684">
    <property type="taxonomic scope" value="Eukaryota"/>
</dbReference>
<dbReference type="GeneTree" id="ENSGT00930000151026"/>
<dbReference type="HOGENOM" id="CLU_001570_15_0_1"/>
<dbReference type="InParanoid" id="Q16850"/>
<dbReference type="OMA" id="HWFPFVG"/>
<dbReference type="OrthoDB" id="1055148at2759"/>
<dbReference type="PAN-GO" id="Q16850">
    <property type="GO annotations" value="2 GO annotations based on evolutionary models"/>
</dbReference>
<dbReference type="PhylomeDB" id="Q16850"/>
<dbReference type="TreeFam" id="TF105091"/>
<dbReference type="BioCyc" id="MetaCyc:HS00076-MONOMER"/>
<dbReference type="BRENDA" id="1.14.13.70">
    <property type="organism ID" value="2681"/>
</dbReference>
<dbReference type="BRENDA" id="1.14.14.154">
    <property type="organism ID" value="2681"/>
</dbReference>
<dbReference type="PathwayCommons" id="Q16850"/>
<dbReference type="Reactome" id="R-HSA-191273">
    <property type="pathway name" value="Cholesterol biosynthesis"/>
</dbReference>
<dbReference type="Reactome" id="R-HSA-211976">
    <property type="pathway name" value="Endogenous sterols"/>
</dbReference>
<dbReference type="Reactome" id="R-HSA-2426168">
    <property type="pathway name" value="Activation of gene expression by SREBF (SREBP)"/>
</dbReference>
<dbReference type="Reactome" id="R-HSA-9619665">
    <property type="pathway name" value="EGR2 and SOX10-mediated initiation of Schwann cell myelination"/>
</dbReference>
<dbReference type="SignaLink" id="Q16850"/>
<dbReference type="UniPathway" id="UPA00770">
    <property type="reaction ID" value="UER00754"/>
</dbReference>
<dbReference type="BioGRID-ORCS" id="1595">
    <property type="hits" value="21 hits in 1163 CRISPR screens"/>
</dbReference>
<dbReference type="ChiTaRS" id="CYP51A1">
    <property type="organism name" value="human"/>
</dbReference>
<dbReference type="EvolutionaryTrace" id="Q16850"/>
<dbReference type="GenomeRNAi" id="1595"/>
<dbReference type="Pharos" id="Q16850">
    <property type="development level" value="Tchem"/>
</dbReference>
<dbReference type="PRO" id="PR:Q16850"/>
<dbReference type="Proteomes" id="UP000005640">
    <property type="component" value="Chromosome 7"/>
</dbReference>
<dbReference type="RNAct" id="Q16850">
    <property type="molecule type" value="protein"/>
</dbReference>
<dbReference type="Bgee" id="ENSG00000001630">
    <property type="expression patterns" value="Expressed in adrenal tissue and 107 other cell types or tissues"/>
</dbReference>
<dbReference type="ExpressionAtlas" id="Q16850">
    <property type="expression patterns" value="baseline and differential"/>
</dbReference>
<dbReference type="GO" id="GO:0005789">
    <property type="term" value="C:endoplasmic reticulum membrane"/>
    <property type="evidence" value="ECO:0000304"/>
    <property type="project" value="Reactome"/>
</dbReference>
<dbReference type="GO" id="GO:0016020">
    <property type="term" value="C:membrane"/>
    <property type="evidence" value="ECO:0007005"/>
    <property type="project" value="UniProtKB"/>
</dbReference>
<dbReference type="GO" id="GO:0020037">
    <property type="term" value="F:heme binding"/>
    <property type="evidence" value="ECO:0000314"/>
    <property type="project" value="UniProtKB"/>
</dbReference>
<dbReference type="GO" id="GO:0005506">
    <property type="term" value="F:iron ion binding"/>
    <property type="evidence" value="ECO:0007669"/>
    <property type="project" value="InterPro"/>
</dbReference>
<dbReference type="GO" id="GO:0016491">
    <property type="term" value="F:oxidoreductase activity"/>
    <property type="evidence" value="ECO:0000318"/>
    <property type="project" value="GO_Central"/>
</dbReference>
<dbReference type="GO" id="GO:0016712">
    <property type="term" value="F:oxidoreductase activity, acting on paired donors, with incorporation or reduction of molecular oxygen, reduced flavin or flavoprotein as one donor, and incorporation of one atom of oxygen"/>
    <property type="evidence" value="ECO:0000304"/>
    <property type="project" value="Reactome"/>
</dbReference>
<dbReference type="GO" id="GO:0008398">
    <property type="term" value="F:sterol 14-demethylase activity"/>
    <property type="evidence" value="ECO:0000314"/>
    <property type="project" value="UniProtKB"/>
</dbReference>
<dbReference type="GO" id="GO:0006695">
    <property type="term" value="P:cholesterol biosynthetic process"/>
    <property type="evidence" value="ECO:0000304"/>
    <property type="project" value="Reactome"/>
</dbReference>
<dbReference type="GO" id="GO:0033488">
    <property type="term" value="P:cholesterol biosynthetic process via 24,25-dihydrolanosterol"/>
    <property type="evidence" value="ECO:0000318"/>
    <property type="project" value="GO_Central"/>
</dbReference>
<dbReference type="GO" id="GO:1900222">
    <property type="term" value="P:negative regulation of amyloid-beta clearance"/>
    <property type="evidence" value="ECO:0000250"/>
    <property type="project" value="ARUK-UCL"/>
</dbReference>
<dbReference type="GO" id="GO:0042177">
    <property type="term" value="P:negative regulation of protein catabolic process"/>
    <property type="evidence" value="ECO:0000250"/>
    <property type="project" value="ARUK-UCL"/>
</dbReference>
<dbReference type="GO" id="GO:0050709">
    <property type="term" value="P:negative regulation of protein secretion"/>
    <property type="evidence" value="ECO:0000250"/>
    <property type="project" value="ARUK-UCL"/>
</dbReference>
<dbReference type="GO" id="GO:0006694">
    <property type="term" value="P:steroid biosynthetic process"/>
    <property type="evidence" value="ECO:0000314"/>
    <property type="project" value="UniProtKB"/>
</dbReference>
<dbReference type="GO" id="GO:0016125">
    <property type="term" value="P:sterol metabolic process"/>
    <property type="evidence" value="ECO:0000304"/>
    <property type="project" value="Reactome"/>
</dbReference>
<dbReference type="CDD" id="cd11042">
    <property type="entry name" value="CYP51-like"/>
    <property type="match status" value="1"/>
</dbReference>
<dbReference type="FunFam" id="1.10.630.10:FF:000027">
    <property type="entry name" value="lanosterol 14-alpha demethylase isoform X1"/>
    <property type="match status" value="1"/>
</dbReference>
<dbReference type="Gene3D" id="1.10.630.10">
    <property type="entry name" value="Cytochrome P450"/>
    <property type="match status" value="1"/>
</dbReference>
<dbReference type="InterPro" id="IPR050529">
    <property type="entry name" value="CYP450_sterol_14alpha_dmase"/>
</dbReference>
<dbReference type="InterPro" id="IPR001128">
    <property type="entry name" value="Cyt_P450"/>
</dbReference>
<dbReference type="InterPro" id="IPR017972">
    <property type="entry name" value="Cyt_P450_CS"/>
</dbReference>
<dbReference type="InterPro" id="IPR002403">
    <property type="entry name" value="Cyt_P450_E_grp-IV"/>
</dbReference>
<dbReference type="InterPro" id="IPR036396">
    <property type="entry name" value="Cyt_P450_sf"/>
</dbReference>
<dbReference type="PANTHER" id="PTHR24304:SF2">
    <property type="entry name" value="24-HYDROXYCHOLESTEROL 7-ALPHA-HYDROXYLASE"/>
    <property type="match status" value="1"/>
</dbReference>
<dbReference type="PANTHER" id="PTHR24304">
    <property type="entry name" value="CYTOCHROME P450 FAMILY 7"/>
    <property type="match status" value="1"/>
</dbReference>
<dbReference type="Pfam" id="PF00067">
    <property type="entry name" value="p450"/>
    <property type="match status" value="1"/>
</dbReference>
<dbReference type="PRINTS" id="PR00465">
    <property type="entry name" value="EP450IV"/>
</dbReference>
<dbReference type="PRINTS" id="PR00385">
    <property type="entry name" value="P450"/>
</dbReference>
<dbReference type="SUPFAM" id="SSF48264">
    <property type="entry name" value="Cytochrome P450"/>
    <property type="match status" value="1"/>
</dbReference>
<dbReference type="PROSITE" id="PS00086">
    <property type="entry name" value="CYTOCHROME_P450"/>
    <property type="match status" value="1"/>
</dbReference>
<reference key="1">
    <citation type="journal article" date="1996" name="Arch. Biochem. Biophys.">
        <title>The ubiquitously expressed human CYP51 encodes lanosterol 14 alpha-demethylase, a cytochrome P450 whose expression is regulated by oxysterols.</title>
        <authorList>
            <person name="Stroemstedt M."/>
            <person name="Rozman D."/>
            <person name="Waterman M.R."/>
        </authorList>
    </citation>
    <scope>NUCLEOTIDE SEQUENCE [MRNA] (ISOFORM 1)</scope>
    <scope>FUNCTION</scope>
    <scope>CATALYTIC ACTIVITY</scope>
    <scope>TISSUE SPECIFICITY</scope>
    <source>
        <tissue>Liver</tissue>
    </source>
</reference>
<reference key="2">
    <citation type="journal article" date="1996" name="J. Biochem.">
        <title>Sterol 14-demethylase P450 (P45014DM*) is one of the most ancient and conserved P450 species.</title>
        <authorList>
            <person name="Aoyama Y."/>
            <person name="Noshiro M."/>
            <person name="Gotoh O."/>
            <person name="Imaoka S."/>
            <person name="Funae Y."/>
            <person name="Kurosawa N."/>
            <person name="Horiuchi T."/>
            <person name="Yoshida Y."/>
        </authorList>
    </citation>
    <scope>NUCLEOTIDE SEQUENCE [MRNA] (ISOFORM 1)</scope>
    <source>
        <tissue>Liver</tissue>
    </source>
</reference>
<reference key="3">
    <citation type="journal article" date="1996" name="Arch. Biochem. Biophys.">
        <title>The three human cytochrome P450 lanosterol 14 alpha-demethylase (CYP51) genes reside on chromosomes 3, 7, and 13: structure of the two retrotransposed pseudogenes, association with a line-1 element, and evolution of the human CYP51 family.</title>
        <authorList>
            <person name="Rozman D."/>
            <person name="Stroemstedt M."/>
            <person name="Waterman M.R."/>
        </authorList>
    </citation>
    <scope>NUCLEOTIDE SEQUENCE [GENOMIC DNA]</scope>
    <source>
        <tissue>Liver</tissue>
    </source>
</reference>
<reference key="4">
    <citation type="journal article" date="1996" name="Genomics">
        <title>Structure and mapping of the human lanosterol 14alpha-demethylase gene (CYP51) encoding the cytochrome P450 involved in cholesterol biosynthesis; comparison of exon/intron organization with other mammalian and fungal CYP genes.</title>
        <authorList>
            <person name="Rozman D."/>
            <person name="Stroemstedt M."/>
            <person name="Tsui L.-C."/>
            <person name="Scherer S.W."/>
            <person name="Waterman M.R."/>
        </authorList>
    </citation>
    <scope>NUCLEOTIDE SEQUENCE [GENOMIC DNA]</scope>
</reference>
<reference key="5">
    <citation type="journal article" date="2004" name="Nat. Genet.">
        <title>Complete sequencing and characterization of 21,243 full-length human cDNAs.</title>
        <authorList>
            <person name="Ota T."/>
            <person name="Suzuki Y."/>
            <person name="Nishikawa T."/>
            <person name="Otsuki T."/>
            <person name="Sugiyama T."/>
            <person name="Irie R."/>
            <person name="Wakamatsu A."/>
            <person name="Hayashi K."/>
            <person name="Sato H."/>
            <person name="Nagai K."/>
            <person name="Kimura K."/>
            <person name="Makita H."/>
            <person name="Sekine M."/>
            <person name="Obayashi M."/>
            <person name="Nishi T."/>
            <person name="Shibahara T."/>
            <person name="Tanaka T."/>
            <person name="Ishii S."/>
            <person name="Yamamoto J."/>
            <person name="Saito K."/>
            <person name="Kawai Y."/>
            <person name="Isono Y."/>
            <person name="Nakamura Y."/>
            <person name="Nagahari K."/>
            <person name="Murakami K."/>
            <person name="Yasuda T."/>
            <person name="Iwayanagi T."/>
            <person name="Wagatsuma M."/>
            <person name="Shiratori A."/>
            <person name="Sudo H."/>
            <person name="Hosoiri T."/>
            <person name="Kaku Y."/>
            <person name="Kodaira H."/>
            <person name="Kondo H."/>
            <person name="Sugawara M."/>
            <person name="Takahashi M."/>
            <person name="Kanda K."/>
            <person name="Yokoi T."/>
            <person name="Furuya T."/>
            <person name="Kikkawa E."/>
            <person name="Omura Y."/>
            <person name="Abe K."/>
            <person name="Kamihara K."/>
            <person name="Katsuta N."/>
            <person name="Sato K."/>
            <person name="Tanikawa M."/>
            <person name="Yamazaki M."/>
            <person name="Ninomiya K."/>
            <person name="Ishibashi T."/>
            <person name="Yamashita H."/>
            <person name="Murakawa K."/>
            <person name="Fujimori K."/>
            <person name="Tanai H."/>
            <person name="Kimata M."/>
            <person name="Watanabe M."/>
            <person name="Hiraoka S."/>
            <person name="Chiba Y."/>
            <person name="Ishida S."/>
            <person name="Ono Y."/>
            <person name="Takiguchi S."/>
            <person name="Watanabe S."/>
            <person name="Yosida M."/>
            <person name="Hotuta T."/>
            <person name="Kusano J."/>
            <person name="Kanehori K."/>
            <person name="Takahashi-Fujii A."/>
            <person name="Hara H."/>
            <person name="Tanase T.-O."/>
            <person name="Nomura Y."/>
            <person name="Togiya S."/>
            <person name="Komai F."/>
            <person name="Hara R."/>
            <person name="Takeuchi K."/>
            <person name="Arita M."/>
            <person name="Imose N."/>
            <person name="Musashino K."/>
            <person name="Yuuki H."/>
            <person name="Oshima A."/>
            <person name="Sasaki N."/>
            <person name="Aotsuka S."/>
            <person name="Yoshikawa Y."/>
            <person name="Matsunawa H."/>
            <person name="Ichihara T."/>
            <person name="Shiohata N."/>
            <person name="Sano S."/>
            <person name="Moriya S."/>
            <person name="Momiyama H."/>
            <person name="Satoh N."/>
            <person name="Takami S."/>
            <person name="Terashima Y."/>
            <person name="Suzuki O."/>
            <person name="Nakagawa S."/>
            <person name="Senoh A."/>
            <person name="Mizoguchi H."/>
            <person name="Goto Y."/>
            <person name="Shimizu F."/>
            <person name="Wakebe H."/>
            <person name="Hishigaki H."/>
            <person name="Watanabe T."/>
            <person name="Sugiyama A."/>
            <person name="Takemoto M."/>
            <person name="Kawakami B."/>
            <person name="Yamazaki M."/>
            <person name="Watanabe K."/>
            <person name="Kumagai A."/>
            <person name="Itakura S."/>
            <person name="Fukuzumi Y."/>
            <person name="Fujimori Y."/>
            <person name="Komiyama M."/>
            <person name="Tashiro H."/>
            <person name="Tanigami A."/>
            <person name="Fujiwara T."/>
            <person name="Ono T."/>
            <person name="Yamada K."/>
            <person name="Fujii Y."/>
            <person name="Ozaki K."/>
            <person name="Hirao M."/>
            <person name="Ohmori Y."/>
            <person name="Kawabata A."/>
            <person name="Hikiji T."/>
            <person name="Kobatake N."/>
            <person name="Inagaki H."/>
            <person name="Ikema Y."/>
            <person name="Okamoto S."/>
            <person name="Okitani R."/>
            <person name="Kawakami T."/>
            <person name="Noguchi S."/>
            <person name="Itoh T."/>
            <person name="Shigeta K."/>
            <person name="Senba T."/>
            <person name="Matsumura K."/>
            <person name="Nakajima Y."/>
            <person name="Mizuno T."/>
            <person name="Morinaga M."/>
            <person name="Sasaki M."/>
            <person name="Togashi T."/>
            <person name="Oyama M."/>
            <person name="Hata H."/>
            <person name="Watanabe M."/>
            <person name="Komatsu T."/>
            <person name="Mizushima-Sugano J."/>
            <person name="Satoh T."/>
            <person name="Shirai Y."/>
            <person name="Takahashi Y."/>
            <person name="Nakagawa K."/>
            <person name="Okumura K."/>
            <person name="Nagase T."/>
            <person name="Nomura N."/>
            <person name="Kikuchi H."/>
            <person name="Masuho Y."/>
            <person name="Yamashita R."/>
            <person name="Nakai K."/>
            <person name="Yada T."/>
            <person name="Nakamura Y."/>
            <person name="Ohara O."/>
            <person name="Isogai T."/>
            <person name="Sugano S."/>
        </authorList>
    </citation>
    <scope>NUCLEOTIDE SEQUENCE [LARGE SCALE MRNA] (ISOFORMS 1 AND 2)</scope>
</reference>
<reference key="6">
    <citation type="journal article" date="2003" name="Nature">
        <title>The DNA sequence of human chromosome 7.</title>
        <authorList>
            <person name="Hillier L.W."/>
            <person name="Fulton R.S."/>
            <person name="Fulton L.A."/>
            <person name="Graves T.A."/>
            <person name="Pepin K.H."/>
            <person name="Wagner-McPherson C."/>
            <person name="Layman D."/>
            <person name="Maas J."/>
            <person name="Jaeger S."/>
            <person name="Walker R."/>
            <person name="Wylie K."/>
            <person name="Sekhon M."/>
            <person name="Becker M.C."/>
            <person name="O'Laughlin M.D."/>
            <person name="Schaller M.E."/>
            <person name="Fewell G.A."/>
            <person name="Delehaunty K.D."/>
            <person name="Miner T.L."/>
            <person name="Nash W.E."/>
            <person name="Cordes M."/>
            <person name="Du H."/>
            <person name="Sun H."/>
            <person name="Edwards J."/>
            <person name="Bradshaw-Cordum H."/>
            <person name="Ali J."/>
            <person name="Andrews S."/>
            <person name="Isak A."/>
            <person name="Vanbrunt A."/>
            <person name="Nguyen C."/>
            <person name="Du F."/>
            <person name="Lamar B."/>
            <person name="Courtney L."/>
            <person name="Kalicki J."/>
            <person name="Ozersky P."/>
            <person name="Bielicki L."/>
            <person name="Scott K."/>
            <person name="Holmes A."/>
            <person name="Harkins R."/>
            <person name="Harris A."/>
            <person name="Strong C.M."/>
            <person name="Hou S."/>
            <person name="Tomlinson C."/>
            <person name="Dauphin-Kohlberg S."/>
            <person name="Kozlowicz-Reilly A."/>
            <person name="Leonard S."/>
            <person name="Rohlfing T."/>
            <person name="Rock S.M."/>
            <person name="Tin-Wollam A.-M."/>
            <person name="Abbott A."/>
            <person name="Minx P."/>
            <person name="Maupin R."/>
            <person name="Strowmatt C."/>
            <person name="Latreille P."/>
            <person name="Miller N."/>
            <person name="Johnson D."/>
            <person name="Murray J."/>
            <person name="Woessner J.P."/>
            <person name="Wendl M.C."/>
            <person name="Yang S.-P."/>
            <person name="Schultz B.R."/>
            <person name="Wallis J.W."/>
            <person name="Spieth J."/>
            <person name="Bieri T.A."/>
            <person name="Nelson J.O."/>
            <person name="Berkowicz N."/>
            <person name="Wohldmann P.E."/>
            <person name="Cook L.L."/>
            <person name="Hickenbotham M.T."/>
            <person name="Eldred J."/>
            <person name="Williams D."/>
            <person name="Bedell J.A."/>
            <person name="Mardis E.R."/>
            <person name="Clifton S.W."/>
            <person name="Chissoe S.L."/>
            <person name="Marra M.A."/>
            <person name="Raymond C."/>
            <person name="Haugen E."/>
            <person name="Gillett W."/>
            <person name="Zhou Y."/>
            <person name="James R."/>
            <person name="Phelps K."/>
            <person name="Iadanoto S."/>
            <person name="Bubb K."/>
            <person name="Simms E."/>
            <person name="Levy R."/>
            <person name="Clendenning J."/>
            <person name="Kaul R."/>
            <person name="Kent W.J."/>
            <person name="Furey T.S."/>
            <person name="Baertsch R.A."/>
            <person name="Brent M.R."/>
            <person name="Keibler E."/>
            <person name="Flicek P."/>
            <person name="Bork P."/>
            <person name="Suyama M."/>
            <person name="Bailey J.A."/>
            <person name="Portnoy M.E."/>
            <person name="Torrents D."/>
            <person name="Chinwalla A.T."/>
            <person name="Gish W.R."/>
            <person name="Eddy S.R."/>
            <person name="McPherson J.D."/>
            <person name="Olson M.V."/>
            <person name="Eichler E.E."/>
            <person name="Green E.D."/>
            <person name="Waterston R.H."/>
            <person name="Wilson R.K."/>
        </authorList>
    </citation>
    <scope>NUCLEOTIDE SEQUENCE [LARGE SCALE GENOMIC DNA]</scope>
</reference>
<reference key="7">
    <citation type="journal article" date="2003" name="Science">
        <title>Human chromosome 7: DNA sequence and biology.</title>
        <authorList>
            <person name="Scherer S.W."/>
            <person name="Cheung J."/>
            <person name="MacDonald J.R."/>
            <person name="Osborne L.R."/>
            <person name="Nakabayashi K."/>
            <person name="Herbrick J.-A."/>
            <person name="Carson A.R."/>
            <person name="Parker-Katiraee L."/>
            <person name="Skaug J."/>
            <person name="Khaja R."/>
            <person name="Zhang J."/>
            <person name="Hudek A.K."/>
            <person name="Li M."/>
            <person name="Haddad M."/>
            <person name="Duggan G.E."/>
            <person name="Fernandez B.A."/>
            <person name="Kanematsu E."/>
            <person name="Gentles S."/>
            <person name="Christopoulos C.C."/>
            <person name="Choufani S."/>
            <person name="Kwasnicka D."/>
            <person name="Zheng X.H."/>
            <person name="Lai Z."/>
            <person name="Nusskern D.R."/>
            <person name="Zhang Q."/>
            <person name="Gu Z."/>
            <person name="Lu F."/>
            <person name="Zeesman S."/>
            <person name="Nowaczyk M.J."/>
            <person name="Teshima I."/>
            <person name="Chitayat D."/>
            <person name="Shuman C."/>
            <person name="Weksberg R."/>
            <person name="Zackai E.H."/>
            <person name="Grebe T.A."/>
            <person name="Cox S.R."/>
            <person name="Kirkpatrick S.J."/>
            <person name="Rahman N."/>
            <person name="Friedman J.M."/>
            <person name="Heng H.H.Q."/>
            <person name="Pelicci P.G."/>
            <person name="Lo-Coco F."/>
            <person name="Belloni E."/>
            <person name="Shaffer L.G."/>
            <person name="Pober B."/>
            <person name="Morton C.C."/>
            <person name="Gusella J.F."/>
            <person name="Bruns G.A.P."/>
            <person name="Korf B.R."/>
            <person name="Quade B.J."/>
            <person name="Ligon A.H."/>
            <person name="Ferguson H."/>
            <person name="Higgins A.W."/>
            <person name="Leach N.T."/>
            <person name="Herrick S.R."/>
            <person name="Lemyre E."/>
            <person name="Farra C.G."/>
            <person name="Kim H.-G."/>
            <person name="Summers A.M."/>
            <person name="Gripp K.W."/>
            <person name="Roberts W."/>
            <person name="Szatmari P."/>
            <person name="Winsor E.J.T."/>
            <person name="Grzeschik K.-H."/>
            <person name="Teebi A."/>
            <person name="Minassian B.A."/>
            <person name="Kere J."/>
            <person name="Armengol L."/>
            <person name="Pujana M.A."/>
            <person name="Estivill X."/>
            <person name="Wilson M.D."/>
            <person name="Koop B.F."/>
            <person name="Tosi S."/>
            <person name="Moore G.E."/>
            <person name="Boright A.P."/>
            <person name="Zlotorynski E."/>
            <person name="Kerem B."/>
            <person name="Kroisel P.M."/>
            <person name="Petek E."/>
            <person name="Oscier D.G."/>
            <person name="Mould S.J."/>
            <person name="Doehner H."/>
            <person name="Doehner K."/>
            <person name="Rommens J.M."/>
            <person name="Vincent J.B."/>
            <person name="Venter J.C."/>
            <person name="Li P.W."/>
            <person name="Mural R.J."/>
            <person name="Adams M.D."/>
            <person name="Tsui L.-C."/>
        </authorList>
    </citation>
    <scope>NUCLEOTIDE SEQUENCE [LARGE SCALE GENOMIC DNA]</scope>
</reference>
<reference key="8">
    <citation type="submission" date="2005-09" db="EMBL/GenBank/DDBJ databases">
        <authorList>
            <person name="Mural R.J."/>
            <person name="Istrail S."/>
            <person name="Sutton G.G."/>
            <person name="Florea L."/>
            <person name="Halpern A.L."/>
            <person name="Mobarry C.M."/>
            <person name="Lippert R."/>
            <person name="Walenz B."/>
            <person name="Shatkay H."/>
            <person name="Dew I."/>
            <person name="Miller J.R."/>
            <person name="Flanigan M.J."/>
            <person name="Edwards N.J."/>
            <person name="Bolanos R."/>
            <person name="Fasulo D."/>
            <person name="Halldorsson B.V."/>
            <person name="Hannenhalli S."/>
            <person name="Turner R."/>
            <person name="Yooseph S."/>
            <person name="Lu F."/>
            <person name="Nusskern D.R."/>
            <person name="Shue B.C."/>
            <person name="Zheng X.H."/>
            <person name="Zhong F."/>
            <person name="Delcher A.L."/>
            <person name="Huson D.H."/>
            <person name="Kravitz S.A."/>
            <person name="Mouchard L."/>
            <person name="Reinert K."/>
            <person name="Remington K.A."/>
            <person name="Clark A.G."/>
            <person name="Waterman M.S."/>
            <person name="Eichler E.E."/>
            <person name="Adams M.D."/>
            <person name="Hunkapiller M.W."/>
            <person name="Myers E.W."/>
            <person name="Venter J.C."/>
        </authorList>
    </citation>
    <scope>NUCLEOTIDE SEQUENCE [LARGE SCALE GENOMIC DNA]</scope>
</reference>
<reference key="9">
    <citation type="journal article" date="2004" name="Genome Res.">
        <title>The status, quality, and expansion of the NIH full-length cDNA project: the Mammalian Gene Collection (MGC).</title>
        <authorList>
            <consortium name="The MGC Project Team"/>
        </authorList>
    </citation>
    <scope>NUCLEOTIDE SEQUENCE [LARGE SCALE MRNA] (ISOFORM 1)</scope>
    <source>
        <tissue>Brain</tissue>
    </source>
</reference>
<reference key="10">
    <citation type="journal article" date="1998" name="FEBS Lett.">
        <title>Molecular diversity of sterol 14alpha-demethylase substrates in plants, fungi and humans.</title>
        <authorList>
            <person name="Lamb D.C."/>
            <person name="Kelly D.E."/>
            <person name="Kelly S.L."/>
        </authorList>
    </citation>
    <scope>FUNCTION</scope>
    <scope>CATALYTIC ACTIVITY</scope>
    <scope>BIOPHYSICOCHEMICAL PROPERTIES</scope>
</reference>
<reference key="11">
    <citation type="journal article" date="2011" name="BMC Syst. Biol.">
        <title>Initial characterization of the human central proteome.</title>
        <authorList>
            <person name="Burkard T.R."/>
            <person name="Planyavsky M."/>
            <person name="Kaupe I."/>
            <person name="Breitwieser F.P."/>
            <person name="Buerckstuemmer T."/>
            <person name="Bennett K.L."/>
            <person name="Superti-Furga G."/>
            <person name="Colinge J."/>
        </authorList>
    </citation>
    <scope>IDENTIFICATION BY MASS SPECTROMETRY [LARGE SCALE ANALYSIS]</scope>
</reference>
<reference key="12">
    <citation type="journal article" date="2014" name="J. Proteomics">
        <title>An enzyme assisted RP-RPLC approach for in-depth analysis of human liver phosphoproteome.</title>
        <authorList>
            <person name="Bian Y."/>
            <person name="Song C."/>
            <person name="Cheng K."/>
            <person name="Dong M."/>
            <person name="Wang F."/>
            <person name="Huang J."/>
            <person name="Sun D."/>
            <person name="Wang L."/>
            <person name="Ye M."/>
            <person name="Zou H."/>
        </authorList>
    </citation>
    <scope>IDENTIFICATION BY MASS SPECTROMETRY [LARGE SCALE ANALYSIS]</scope>
    <source>
        <tissue>Liver</tissue>
    </source>
</reference>
<reference key="13">
    <citation type="journal article" date="2015" name="Proteomics">
        <title>N-terminome analysis of the human mitochondrial proteome.</title>
        <authorList>
            <person name="Vaca Jacome A.S."/>
            <person name="Rabilloud T."/>
            <person name="Schaeffer-Reiss C."/>
            <person name="Rompais M."/>
            <person name="Ayoub D."/>
            <person name="Lane L."/>
            <person name="Bairoch A."/>
            <person name="Van Dorsselaer A."/>
            <person name="Carapito C."/>
        </authorList>
    </citation>
    <scope>IDENTIFICATION BY MASS SPECTROMETRY [LARGE SCALE ANALYSIS]</scope>
</reference>
<reference key="14">
    <citation type="journal article" date="2020" name="Biochem. J.">
        <title>The cholesterol synthesis enzyme lanosterol 14alpha-demethylase is post-translationally regulated by the E3 ubiquitin ligase MARCH6.</title>
        <authorList>
            <person name="Scott N.A."/>
            <person name="Sharpe L.J."/>
            <person name="Capell-Hattam I.M."/>
            <person name="Gullo S.J."/>
            <person name="Luu W."/>
            <person name="Brown A.J."/>
        </authorList>
    </citation>
    <scope>UBIQUITINATION BY MARCHF6</scope>
</reference>
<reference key="15">
    <citation type="journal article" date="2010" name="J. Mol. Biol.">
        <title>Structural basis of human CYP51 inhibition by antifungal azoles.</title>
        <authorList>
            <person name="Strushkevich N."/>
            <person name="Usanov S.A."/>
            <person name="Park H.W."/>
        </authorList>
    </citation>
    <scope>X-RAY CRYSTALLOGRAPHY (2.8 ANGSTROMS) OF 60-508 IN COMPLEXES WITH HEME; KETOCONAZOLE AND ECONAZOLE</scope>
    <scope>CATALYTIC ACTIVITY</scope>
    <scope>FUNCTION</scope>
    <scope>COFACTOR</scope>
</reference>
<accession>Q16850</accession>
<accession>A0A0C4DFL7</accession>
<accession>A4D1F8</accession>
<accession>B2RAI4</accession>
<accession>B4DJ55</accession>
<accession>O00770</accession>
<accession>O00772</accession>
<accession>Q16784</accession>
<accession>Q8N1A8</accession>
<accession>Q99868</accession>
<proteinExistence type="evidence at protein level"/>
<organism>
    <name type="scientific">Homo sapiens</name>
    <name type="common">Human</name>
    <dbReference type="NCBI Taxonomy" id="9606"/>
    <lineage>
        <taxon>Eukaryota</taxon>
        <taxon>Metazoa</taxon>
        <taxon>Chordata</taxon>
        <taxon>Craniata</taxon>
        <taxon>Vertebrata</taxon>
        <taxon>Euteleostomi</taxon>
        <taxon>Mammalia</taxon>
        <taxon>Eutheria</taxon>
        <taxon>Euarchontoglires</taxon>
        <taxon>Primates</taxon>
        <taxon>Haplorrhini</taxon>
        <taxon>Catarrhini</taxon>
        <taxon>Hominidae</taxon>
        <taxon>Homo</taxon>
    </lineage>
</organism>
<evidence type="ECO:0000250" key="1">
    <source>
        <dbReference type="UniProtKB" id="Q64654"/>
    </source>
</evidence>
<evidence type="ECO:0000255" key="2"/>
<evidence type="ECO:0000269" key="3">
    <source>
    </source>
</evidence>
<evidence type="ECO:0000269" key="4">
    <source>
    </source>
</evidence>
<evidence type="ECO:0000269" key="5">
    <source>
    </source>
</evidence>
<evidence type="ECO:0000269" key="6">
    <source>
    </source>
</evidence>
<evidence type="ECO:0000303" key="7">
    <source>
    </source>
</evidence>
<evidence type="ECO:0000305" key="8"/>
<evidence type="ECO:0000305" key="9">
    <source>
    </source>
</evidence>
<evidence type="ECO:0000305" key="10">
    <source>
    </source>
</evidence>
<evidence type="ECO:0000305" key="11">
    <source>
    </source>
</evidence>
<evidence type="ECO:0000312" key="12">
    <source>
        <dbReference type="HGNC" id="HGNC:2649"/>
    </source>
</evidence>
<evidence type="ECO:0007829" key="13">
    <source>
        <dbReference type="PDB" id="3JUV"/>
    </source>
</evidence>
<evidence type="ECO:0007829" key="14">
    <source>
        <dbReference type="PDB" id="6Q2T"/>
    </source>
</evidence>
<evidence type="ECO:0007829" key="15">
    <source>
        <dbReference type="PDB" id="6UEZ"/>
    </source>
</evidence>
<sequence>MAAAAGMLLLGLLQAGGSVLGQAMEKVTGGNLLSMLLIACAFTLSLVYLIRLAAGHLVQLPAGVKSPPYIFSPIPFLGHAIAFGKSPIEFLENAYEKYGPVFSFTMVGKTFTYLLGSDAAALLFNSKNEDLNAEDVYSRLTTPVFGKGVAYDVPNPVFLEQKKMLKSGLNIAHFKQHVSIIEKETKEYFESWGESGEKNVFEALSELIILTASHCLHGKEIRSQLNEKVAQLYADLDGGFSHAAWLLPGWLPLPSFRRRDRAHREIKDIFYKAIQKRRQSQEKIDDILQTLLDATYKDGRPLTDDEVAGMLIGLLLAGQHTSSTTSAWMGFFLARDKTLQKKCYLEQKTVCGENLPPLTYDQLKDLNLLDRCIKETLRLRPPIMIMMRMARTPQTVAGYTIPPGHQVCVSPTVNQRLKDSWVERLDFNPDRYLQDNPASGEKFAYVPFGAGRHRCIGENFAYVQIKTIWSTMLRLYEFDLIDGYFPTVNYTTMIHTPENPVIRYKRRSK</sequence>
<name>CP51A_HUMAN</name>
<keyword id="KW-0002">3D-structure</keyword>
<keyword id="KW-0025">Alternative splicing</keyword>
<keyword id="KW-0152">Cholesterol biosynthesis</keyword>
<keyword id="KW-0153">Cholesterol metabolism</keyword>
<keyword id="KW-0256">Endoplasmic reticulum</keyword>
<keyword id="KW-0349">Heme</keyword>
<keyword id="KW-0408">Iron</keyword>
<keyword id="KW-0444">Lipid biosynthesis</keyword>
<keyword id="KW-0443">Lipid metabolism</keyword>
<keyword id="KW-0472">Membrane</keyword>
<keyword id="KW-0479">Metal-binding</keyword>
<keyword id="KW-0492">Microsome</keyword>
<keyword id="KW-0503">Monooxygenase</keyword>
<keyword id="KW-0560">Oxidoreductase</keyword>
<keyword id="KW-1267">Proteomics identification</keyword>
<keyword id="KW-1185">Reference proteome</keyword>
<keyword id="KW-0752">Steroid biosynthesis</keyword>
<keyword id="KW-0753">Steroid metabolism</keyword>
<keyword id="KW-0756">Sterol biosynthesis</keyword>
<keyword id="KW-1207">Sterol metabolism</keyword>
<keyword id="KW-0812">Transmembrane</keyword>
<keyword id="KW-1133">Transmembrane helix</keyword>
<keyword id="KW-0832">Ubl conjugation</keyword>
<feature type="chain" id="PRO_0000051998" description="Lanosterol 14-alpha demethylase">
    <location>
        <begin position="1"/>
        <end position="509"/>
    </location>
</feature>
<feature type="transmembrane region" description="Helical" evidence="2">
    <location>
        <begin position="30"/>
        <end position="50"/>
    </location>
</feature>
<feature type="binding site" description="axial binding residue" evidence="3">
    <location>
        <position position="455"/>
    </location>
    <ligand>
        <name>heme</name>
        <dbReference type="ChEBI" id="CHEBI:30413"/>
    </ligand>
    <ligandPart>
        <name>Fe</name>
        <dbReference type="ChEBI" id="CHEBI:18248"/>
    </ligandPart>
</feature>
<feature type="splice variant" id="VSP_037413" description="In isoform 2." evidence="7">
    <location>
        <begin position="1"/>
        <end position="105"/>
    </location>
</feature>
<feature type="sequence variant" id="VAR_023470" description="In dbSNP:rs2229188.">
    <original>V</original>
    <variation>A</variation>
    <location>
        <position position="19"/>
    </location>
</feature>
<feature type="sequence conflict" description="In Ref. 5; BAG36881." evidence="8" ref="5">
    <original>K</original>
    <variation>E</variation>
    <location>
        <position position="276"/>
    </location>
</feature>
<feature type="sequence conflict" description="In Ref. 4; AAC50951." evidence="8" ref="4">
    <original>R</original>
    <variation>T</variation>
    <location>
        <position position="278"/>
    </location>
</feature>
<feature type="sequence conflict" description="In Ref. 4; AAC50951." evidence="8" ref="4">
    <original>K</original>
    <variation>R</variation>
    <location>
        <position position="374"/>
    </location>
</feature>
<feature type="sequence conflict" description="In Ref. 9; AAH32322." evidence="8" ref="9">
    <original>I</original>
    <variation>V</variation>
    <location>
        <position position="383"/>
    </location>
</feature>
<feature type="turn" evidence="15">
    <location>
        <begin position="75"/>
        <end position="77"/>
    </location>
</feature>
<feature type="helix" evidence="15">
    <location>
        <begin position="80"/>
        <end position="85"/>
    </location>
</feature>
<feature type="helix" evidence="15">
    <location>
        <begin position="87"/>
        <end position="98"/>
    </location>
</feature>
<feature type="strand" evidence="15">
    <location>
        <begin position="100"/>
        <end position="106"/>
    </location>
</feature>
<feature type="strand" evidence="15">
    <location>
        <begin position="109"/>
        <end position="114"/>
    </location>
</feature>
<feature type="helix" evidence="15">
    <location>
        <begin position="117"/>
        <end position="125"/>
    </location>
</feature>
<feature type="turn" evidence="15">
    <location>
        <begin position="128"/>
        <end position="130"/>
    </location>
</feature>
<feature type="strand" evidence="15">
    <location>
        <begin position="131"/>
        <end position="133"/>
    </location>
</feature>
<feature type="helix" evidence="15">
    <location>
        <begin position="134"/>
        <end position="145"/>
    </location>
</feature>
<feature type="helix" evidence="15">
    <location>
        <begin position="150"/>
        <end position="152"/>
    </location>
</feature>
<feature type="helix" evidence="15">
    <location>
        <begin position="155"/>
        <end position="165"/>
    </location>
</feature>
<feature type="turn" evidence="15">
    <location>
        <begin position="166"/>
        <end position="168"/>
    </location>
</feature>
<feature type="helix" evidence="15">
    <location>
        <begin position="171"/>
        <end position="189"/>
    </location>
</feature>
<feature type="helix" evidence="15">
    <location>
        <begin position="190"/>
        <end position="192"/>
    </location>
</feature>
<feature type="strand" evidence="15">
    <location>
        <begin position="194"/>
        <end position="199"/>
    </location>
</feature>
<feature type="helix" evidence="15">
    <location>
        <begin position="200"/>
        <end position="216"/>
    </location>
</feature>
<feature type="helix" evidence="15">
    <location>
        <begin position="219"/>
        <end position="223"/>
    </location>
</feature>
<feature type="helix" evidence="15">
    <location>
        <begin position="229"/>
        <end position="237"/>
    </location>
</feature>
<feature type="helix" evidence="15">
    <location>
        <begin position="242"/>
        <end position="246"/>
    </location>
</feature>
<feature type="strand" evidence="15">
    <location>
        <begin position="252"/>
        <end position="254"/>
    </location>
</feature>
<feature type="helix" evidence="15">
    <location>
        <begin position="255"/>
        <end position="277"/>
    </location>
</feature>
<feature type="helix" evidence="15">
    <location>
        <begin position="288"/>
        <end position="292"/>
    </location>
</feature>
<feature type="strand" evidence="14">
    <location>
        <begin position="297"/>
        <end position="299"/>
    </location>
</feature>
<feature type="helix" evidence="15">
    <location>
        <begin position="304"/>
        <end position="335"/>
    </location>
</feature>
<feature type="helix" evidence="15">
    <location>
        <begin position="337"/>
        <end position="351"/>
    </location>
</feature>
<feature type="helix" evidence="15">
    <location>
        <begin position="360"/>
        <end position="363"/>
    </location>
</feature>
<feature type="helix" evidence="15">
    <location>
        <begin position="367"/>
        <end position="379"/>
    </location>
</feature>
<feature type="strand" evidence="15">
    <location>
        <begin position="386"/>
        <end position="392"/>
    </location>
</feature>
<feature type="strand" evidence="15">
    <location>
        <begin position="394"/>
        <end position="396"/>
    </location>
</feature>
<feature type="strand" evidence="15">
    <location>
        <begin position="399"/>
        <end position="401"/>
    </location>
</feature>
<feature type="strand" evidence="15">
    <location>
        <begin position="406"/>
        <end position="409"/>
    </location>
</feature>
<feature type="helix" evidence="15">
    <location>
        <begin position="411"/>
        <end position="414"/>
    </location>
</feature>
<feature type="turn" evidence="15">
    <location>
        <begin position="418"/>
        <end position="420"/>
    </location>
</feature>
<feature type="turn" evidence="15">
    <location>
        <begin position="422"/>
        <end position="425"/>
    </location>
</feature>
<feature type="helix" evidence="15">
    <location>
        <begin position="429"/>
        <end position="433"/>
    </location>
</feature>
<feature type="helix" evidence="15">
    <location>
        <begin position="437"/>
        <end position="440"/>
    </location>
</feature>
<feature type="strand" evidence="15">
    <location>
        <begin position="441"/>
        <end position="445"/>
    </location>
</feature>
<feature type="helix" evidence="15">
    <location>
        <begin position="451"/>
        <end position="453"/>
    </location>
</feature>
<feature type="helix" evidence="15">
    <location>
        <begin position="458"/>
        <end position="475"/>
    </location>
</feature>
<feature type="strand" evidence="15">
    <location>
        <begin position="476"/>
        <end position="479"/>
    </location>
</feature>
<feature type="strand" evidence="13">
    <location>
        <begin position="481"/>
        <end position="483"/>
    </location>
</feature>
<feature type="strand" evidence="15">
    <location>
        <begin position="491"/>
        <end position="494"/>
    </location>
</feature>
<feature type="strand" evidence="15">
    <location>
        <begin position="496"/>
        <end position="499"/>
    </location>
</feature>
<feature type="strand" evidence="15">
    <location>
        <begin position="501"/>
        <end position="506"/>
    </location>
</feature>
<comment type="function">
    <text evidence="3 5 6">Sterol 14alpha-demethylase that plays a critical role in the cholesterol biosynthesis pathway, being cholesterol the major sterol component in mammalian membranes as well as a precursor for bile acid and steroid hormone synthesis (PubMed:20149798, PubMed:8619637, PubMed:9559662). Cytochrome P450 monooxygenase that catalyzes the three-step oxidative removal of the 14alpha-methyl group (C-32) of sterols such as lanosterol (lanosta-8,24-dien-3beta-ol) and 24,25-dihydrolanosterol (DHL) in the form of formate, and converts the sterols to 4,4-dimethyl-5alpha-cholesta-8,14,24-trien-3beta-ol and 4,4-dimethyl-8,14-cholestadien-3beta-ol, respectively, which are intermediates of cholesterol biosynthesis (PubMed:20149798, PubMed:8619637, PubMed:9559662). Can also demethylate substrates not intrinsic to mammals, such as eburicol (24-methylene-24,25-dihydrolanosterol), but at a lower rate than DHL (PubMed:9559662).</text>
</comment>
<comment type="catalytic activity">
    <reaction evidence="3 5 6">
        <text>a 14alpha-methyl steroid + 3 reduced [NADPH--hemoprotein reductase] + 3 O2 = a Delta(14) steroid + formate + 3 oxidized [NADPH--hemoprotein reductase] + 4 H2O + 4 H(+)</text>
        <dbReference type="Rhea" id="RHEA:54028"/>
        <dbReference type="Rhea" id="RHEA-COMP:11964"/>
        <dbReference type="Rhea" id="RHEA-COMP:11965"/>
        <dbReference type="ChEBI" id="CHEBI:15377"/>
        <dbReference type="ChEBI" id="CHEBI:15378"/>
        <dbReference type="ChEBI" id="CHEBI:15379"/>
        <dbReference type="ChEBI" id="CHEBI:15740"/>
        <dbReference type="ChEBI" id="CHEBI:57618"/>
        <dbReference type="ChEBI" id="CHEBI:58210"/>
        <dbReference type="ChEBI" id="CHEBI:138029"/>
        <dbReference type="ChEBI" id="CHEBI:138031"/>
        <dbReference type="EC" id="1.14.14.154"/>
    </reaction>
    <physiologicalReaction direction="left-to-right" evidence="9 10 11">
        <dbReference type="Rhea" id="RHEA:54029"/>
    </physiologicalReaction>
</comment>
<comment type="catalytic activity">
    <reaction evidence="3 6">
        <text>lanosterol + 3 reduced [NADPH--hemoprotein reductase] + 3 O2 = 4,4-dimethyl-5alpha-cholesta-8,14,24-trien-3beta-ol + formate + 3 oxidized [NADPH--hemoprotein reductase] + 4 H2O + 4 H(+)</text>
        <dbReference type="Rhea" id="RHEA:25286"/>
        <dbReference type="Rhea" id="RHEA-COMP:11964"/>
        <dbReference type="Rhea" id="RHEA-COMP:11965"/>
        <dbReference type="ChEBI" id="CHEBI:15377"/>
        <dbReference type="ChEBI" id="CHEBI:15378"/>
        <dbReference type="ChEBI" id="CHEBI:15379"/>
        <dbReference type="ChEBI" id="CHEBI:15740"/>
        <dbReference type="ChEBI" id="CHEBI:16521"/>
        <dbReference type="ChEBI" id="CHEBI:17813"/>
        <dbReference type="ChEBI" id="CHEBI:57618"/>
        <dbReference type="ChEBI" id="CHEBI:58210"/>
        <dbReference type="EC" id="1.14.14.154"/>
    </reaction>
    <physiologicalReaction direction="left-to-right" evidence="9 11">
        <dbReference type="Rhea" id="RHEA:25287"/>
    </physiologicalReaction>
</comment>
<comment type="catalytic activity">
    <reaction evidence="5 6">
        <text>24,25-dihydrolanosterol + 3 reduced [NADPH--hemoprotein reductase] + 3 O2 = 4,4-dimethyl-8,14-cholestadien-3beta-ol + formate + 3 oxidized [NADPH--hemoprotein reductase] + 4 H2O + 4 H(+)</text>
        <dbReference type="Rhea" id="RHEA:45960"/>
        <dbReference type="Rhea" id="RHEA-COMP:11964"/>
        <dbReference type="Rhea" id="RHEA-COMP:11965"/>
        <dbReference type="ChEBI" id="CHEBI:15377"/>
        <dbReference type="ChEBI" id="CHEBI:15378"/>
        <dbReference type="ChEBI" id="CHEBI:15379"/>
        <dbReference type="ChEBI" id="CHEBI:15740"/>
        <dbReference type="ChEBI" id="CHEBI:28113"/>
        <dbReference type="ChEBI" id="CHEBI:57618"/>
        <dbReference type="ChEBI" id="CHEBI:58210"/>
        <dbReference type="ChEBI" id="CHEBI:78904"/>
    </reaction>
    <physiologicalReaction direction="left-to-right" evidence="10 11">
        <dbReference type="Rhea" id="RHEA:45961"/>
    </physiologicalReaction>
</comment>
<comment type="catalytic activity">
    <reaction evidence="1">
        <text>a 14alpha-methyl steroid + reduced [NADPH--hemoprotein reductase] + O2 = a 14alpha-hydroxymethyl steroid + oxidized [NADPH--hemoprotein reductase] + H2O + H(+)</text>
        <dbReference type="Rhea" id="RHEA:68060"/>
        <dbReference type="Rhea" id="RHEA-COMP:11964"/>
        <dbReference type="Rhea" id="RHEA-COMP:11965"/>
        <dbReference type="ChEBI" id="CHEBI:15377"/>
        <dbReference type="ChEBI" id="CHEBI:15378"/>
        <dbReference type="ChEBI" id="CHEBI:15379"/>
        <dbReference type="ChEBI" id="CHEBI:57618"/>
        <dbReference type="ChEBI" id="CHEBI:58210"/>
        <dbReference type="ChEBI" id="CHEBI:138029"/>
        <dbReference type="ChEBI" id="CHEBI:176901"/>
    </reaction>
    <physiologicalReaction direction="left-to-right" evidence="1">
        <dbReference type="Rhea" id="RHEA:68061"/>
    </physiologicalReaction>
</comment>
<comment type="catalytic activity">
    <reaction evidence="1">
        <text>a 14alpha-hydroxymethyl steroid + reduced [NADPH--hemoprotein reductase] + O2 = a 14alpha-formyl steroid + oxidized [NADPH--hemoprotein reductase] + 2 H2O + H(+)</text>
        <dbReference type="Rhea" id="RHEA:68064"/>
        <dbReference type="Rhea" id="RHEA-COMP:11964"/>
        <dbReference type="Rhea" id="RHEA-COMP:11965"/>
        <dbReference type="ChEBI" id="CHEBI:15377"/>
        <dbReference type="ChEBI" id="CHEBI:15378"/>
        <dbReference type="ChEBI" id="CHEBI:15379"/>
        <dbReference type="ChEBI" id="CHEBI:57618"/>
        <dbReference type="ChEBI" id="CHEBI:58210"/>
        <dbReference type="ChEBI" id="CHEBI:176901"/>
        <dbReference type="ChEBI" id="CHEBI:176902"/>
    </reaction>
    <physiologicalReaction direction="left-to-right" evidence="1">
        <dbReference type="Rhea" id="RHEA:68065"/>
    </physiologicalReaction>
</comment>
<comment type="catalytic activity">
    <reaction evidence="1">
        <text>a 14alpha-formyl steroid + reduced [NADPH--hemoprotein reductase] + O2 = a Delta(14) steroid + formate + oxidized [NADPH--hemoprotein reductase] + H2O + 2 H(+)</text>
        <dbReference type="Rhea" id="RHEA:68068"/>
        <dbReference type="Rhea" id="RHEA-COMP:11964"/>
        <dbReference type="Rhea" id="RHEA-COMP:11965"/>
        <dbReference type="ChEBI" id="CHEBI:15377"/>
        <dbReference type="ChEBI" id="CHEBI:15378"/>
        <dbReference type="ChEBI" id="CHEBI:15379"/>
        <dbReference type="ChEBI" id="CHEBI:15740"/>
        <dbReference type="ChEBI" id="CHEBI:57618"/>
        <dbReference type="ChEBI" id="CHEBI:58210"/>
        <dbReference type="ChEBI" id="CHEBI:138031"/>
        <dbReference type="ChEBI" id="CHEBI:176902"/>
    </reaction>
    <physiologicalReaction direction="left-to-right" evidence="1">
        <dbReference type="Rhea" id="RHEA:68069"/>
    </physiologicalReaction>
</comment>
<comment type="catalytic activity">
    <reaction evidence="1">
        <text>lanosterol + reduced [NADPH--hemoprotein reductase] + O2 = 32-hydroxylanosterol + oxidized [NADPH--hemoprotein reductase] + H2O + H(+)</text>
        <dbReference type="Rhea" id="RHEA:75103"/>
        <dbReference type="Rhea" id="RHEA-COMP:11964"/>
        <dbReference type="Rhea" id="RHEA-COMP:11965"/>
        <dbReference type="ChEBI" id="CHEBI:15377"/>
        <dbReference type="ChEBI" id="CHEBI:15378"/>
        <dbReference type="ChEBI" id="CHEBI:15379"/>
        <dbReference type="ChEBI" id="CHEBI:16521"/>
        <dbReference type="ChEBI" id="CHEBI:57618"/>
        <dbReference type="ChEBI" id="CHEBI:58210"/>
        <dbReference type="ChEBI" id="CHEBI:166806"/>
    </reaction>
    <physiologicalReaction direction="left-to-right" evidence="1">
        <dbReference type="Rhea" id="RHEA:75104"/>
    </physiologicalReaction>
</comment>
<comment type="catalytic activity">
    <reaction evidence="1">
        <text>32-hydroxylanosterol + reduced [NADPH--hemoprotein reductase] + O2 = 32-oxolanosterol + oxidized [NADPH--hemoprotein reductase] + 2 H2O + H(+)</text>
        <dbReference type="Rhea" id="RHEA:75107"/>
        <dbReference type="Rhea" id="RHEA-COMP:11964"/>
        <dbReference type="Rhea" id="RHEA-COMP:11965"/>
        <dbReference type="ChEBI" id="CHEBI:15377"/>
        <dbReference type="ChEBI" id="CHEBI:15378"/>
        <dbReference type="ChEBI" id="CHEBI:15379"/>
        <dbReference type="ChEBI" id="CHEBI:57618"/>
        <dbReference type="ChEBI" id="CHEBI:58210"/>
        <dbReference type="ChEBI" id="CHEBI:166681"/>
        <dbReference type="ChEBI" id="CHEBI:166806"/>
    </reaction>
    <physiologicalReaction direction="left-to-right" evidence="1">
        <dbReference type="Rhea" id="RHEA:75108"/>
    </physiologicalReaction>
</comment>
<comment type="catalytic activity">
    <reaction evidence="1">
        <text>32-oxolanosterol + reduced [NADPH--hemoprotein reductase] + O2 = 4,4-dimethyl-5alpha-cholesta-8,14,24-trien-3beta-ol + formate + oxidized [NADPH--hemoprotein reductase] + H2O + 2 H(+)</text>
        <dbReference type="Rhea" id="RHEA:75111"/>
        <dbReference type="Rhea" id="RHEA-COMP:11964"/>
        <dbReference type="Rhea" id="RHEA-COMP:11965"/>
        <dbReference type="ChEBI" id="CHEBI:15377"/>
        <dbReference type="ChEBI" id="CHEBI:15378"/>
        <dbReference type="ChEBI" id="CHEBI:15379"/>
        <dbReference type="ChEBI" id="CHEBI:15740"/>
        <dbReference type="ChEBI" id="CHEBI:17813"/>
        <dbReference type="ChEBI" id="CHEBI:57618"/>
        <dbReference type="ChEBI" id="CHEBI:58210"/>
        <dbReference type="ChEBI" id="CHEBI:166681"/>
    </reaction>
    <physiologicalReaction direction="left-to-right" evidence="1">
        <dbReference type="Rhea" id="RHEA:75112"/>
    </physiologicalReaction>
</comment>
<comment type="catalytic activity">
    <reaction evidence="1">
        <text>24,25-dihydrolanosterol + reduced [NADPH--hemoprotein reductase] + O2 = 32-hydroxy-24,25-dihydrolanosterol + oxidized [NADPH--hemoprotein reductase] + H2O + H(+)</text>
        <dbReference type="Rhea" id="RHEA:75079"/>
        <dbReference type="Rhea" id="RHEA-COMP:11964"/>
        <dbReference type="Rhea" id="RHEA-COMP:11965"/>
        <dbReference type="ChEBI" id="CHEBI:15377"/>
        <dbReference type="ChEBI" id="CHEBI:15378"/>
        <dbReference type="ChEBI" id="CHEBI:15379"/>
        <dbReference type="ChEBI" id="CHEBI:28113"/>
        <dbReference type="ChEBI" id="CHEBI:57618"/>
        <dbReference type="ChEBI" id="CHEBI:58210"/>
        <dbReference type="ChEBI" id="CHEBI:87057"/>
    </reaction>
    <physiologicalReaction direction="left-to-right" evidence="1">
        <dbReference type="Rhea" id="RHEA:75080"/>
    </physiologicalReaction>
</comment>
<comment type="catalytic activity">
    <reaction evidence="1">
        <text>32-hydroxy-24,25-dihydrolanosterol + reduced [NADPH--hemoprotein reductase] + O2 = 32-oxo-24,25-dihydrolanosterol + oxidized [NADPH--hemoprotein reductase] + 2 H2O + H(+)</text>
        <dbReference type="Rhea" id="RHEA:75087"/>
        <dbReference type="Rhea" id="RHEA-COMP:11964"/>
        <dbReference type="Rhea" id="RHEA-COMP:11965"/>
        <dbReference type="ChEBI" id="CHEBI:15377"/>
        <dbReference type="ChEBI" id="CHEBI:15378"/>
        <dbReference type="ChEBI" id="CHEBI:15379"/>
        <dbReference type="ChEBI" id="CHEBI:57618"/>
        <dbReference type="ChEBI" id="CHEBI:58210"/>
        <dbReference type="ChEBI" id="CHEBI:87057"/>
        <dbReference type="ChEBI" id="CHEBI:87060"/>
    </reaction>
    <physiologicalReaction direction="left-to-right" evidence="1">
        <dbReference type="Rhea" id="RHEA:75088"/>
    </physiologicalReaction>
</comment>
<comment type="catalytic activity">
    <reaction evidence="1">
        <text>32-oxo-24,25-dihydrolanosterol + reduced [NADPH--hemoprotein reductase] + O2 = 4,4-dimethyl-8,14-cholestadien-3beta-ol + formate + oxidized [NADPH--hemoprotein reductase] + H2O + 2 H(+)</text>
        <dbReference type="Rhea" id="RHEA:75083"/>
        <dbReference type="Rhea" id="RHEA-COMP:11964"/>
        <dbReference type="Rhea" id="RHEA-COMP:11965"/>
        <dbReference type="ChEBI" id="CHEBI:15377"/>
        <dbReference type="ChEBI" id="CHEBI:15378"/>
        <dbReference type="ChEBI" id="CHEBI:15379"/>
        <dbReference type="ChEBI" id="CHEBI:15740"/>
        <dbReference type="ChEBI" id="CHEBI:57618"/>
        <dbReference type="ChEBI" id="CHEBI:58210"/>
        <dbReference type="ChEBI" id="CHEBI:78904"/>
        <dbReference type="ChEBI" id="CHEBI:87060"/>
    </reaction>
    <physiologicalReaction direction="left-to-right" evidence="1">
        <dbReference type="Rhea" id="RHEA:75084"/>
    </physiologicalReaction>
</comment>
<comment type="cofactor">
    <cofactor evidence="3">
        <name>heme</name>
        <dbReference type="ChEBI" id="CHEBI:30413"/>
    </cofactor>
</comment>
<comment type="activity regulation">
    <text evidence="1">Inhibited by azalanstat. Inhibited by azole antifungal agents ketoconazole, itraconazole and fluconazole.</text>
</comment>
<comment type="biophysicochemical properties">
    <kinetics>
        <KM evidence="6">29 uM for lanosterol</KM>
        <KM evidence="6">27 uM for 24,25-dihydrolanosterol</KM>
        <KM evidence="6">32 uM for eburicol</KM>
        <KM evidence="6">32 uM for obtusifoliol</KM>
        <Vmax evidence="6">0.18 nmol/min/nmol enzyme towards lanosterol</Vmax>
        <Vmax evidence="6">0.5 nmol/min/nmol enzyme towards 24,25-dihydrolanosterol</Vmax>
        <Vmax evidence="6">0.22 nmol/min/nmol enzyme towards eburicol</Vmax>
        <Vmax evidence="6">0.44 nmol/min/nmol enzyme towards obtusifoliol</Vmax>
    </kinetics>
</comment>
<comment type="pathway">
    <text evidence="10">Steroid biosynthesis; zymosterol biosynthesis; zymosterol from lanosterol: step 1/6.</text>
</comment>
<comment type="subcellular location">
    <subcellularLocation>
        <location evidence="1">Endoplasmic reticulum membrane</location>
        <topology evidence="2">Single-pass membrane protein</topology>
    </subcellularLocation>
    <subcellularLocation>
        <location evidence="1">Microsome membrane</location>
        <topology evidence="2">Single-pass membrane protein</topology>
    </subcellularLocation>
</comment>
<comment type="alternative products">
    <event type="alternative splicing"/>
    <isoform>
        <id>Q16850-1</id>
        <name>1</name>
        <sequence type="displayed"/>
    </isoform>
    <isoform>
        <id>Q16850-2</id>
        <name>2</name>
        <sequence type="described" ref="VSP_037413"/>
    </isoform>
</comment>
<comment type="tissue specificity">
    <text evidence="5">Ubiquitously expressed with highest levels in testis, ovary, adrenal, prostate, liver, kidney and lung.</text>
</comment>
<comment type="PTM">
    <text evidence="4">Ubiquitinated by MARCHF6, leading to proteasomal degradation.</text>
</comment>
<comment type="similarity">
    <text evidence="8">Belongs to the cytochrome P450 family.</text>
</comment>
<comment type="caution">
    <text evidence="8">It is uncertain whether Met-1 or Met-7 is the initiator.</text>
</comment>
<comment type="sequence caution" evidence="8">
    <conflict type="erroneous initiation">
        <sequence resource="EMBL-CDS" id="AAC50951"/>
    </conflict>
    <text>Truncated N-terminus.</text>
</comment>
<gene>
    <name evidence="12" type="primary">CYP51A1</name>
    <name type="synonym">CYP51</name>
</gene>
<protein>
    <recommendedName>
        <fullName evidence="8">Lanosterol 14-alpha demethylase</fullName>
        <shortName>LDM</shortName>
        <ecNumber evidence="3 5 6">1.14.14.154</ecNumber>
    </recommendedName>
    <alternativeName>
        <fullName>CYPLI</fullName>
    </alternativeName>
    <alternativeName>
        <fullName>Cytochrome P450 51A1</fullName>
        <shortName>CYP51A1</shortName>
    </alternativeName>
    <alternativeName>
        <fullName>Cytochrome P450-14DM</fullName>
        <shortName>Cytochrome P45014DM</shortName>
    </alternativeName>
    <alternativeName>
        <fullName>Cytochrome P450LI</fullName>
    </alternativeName>
    <alternativeName>
        <fullName>Sterol 14-alpha demethylase</fullName>
    </alternativeName>
</protein>